<name>ALDOA_GADMO</name>
<accession>P86980</accession>
<protein>
    <recommendedName>
        <fullName evidence="5">Fructose-bisphosphate aldolase A</fullName>
        <ecNumber evidence="1">4.1.2.13</ecNumber>
    </recommendedName>
    <alternativeName>
        <fullName evidence="1">Muscle-type aldolase</fullName>
    </alternativeName>
    <allergenName evidence="5">Gad m 3.0101</allergenName>
</protein>
<comment type="function">
    <text evidence="1">Plays a key role in glycolysis and gluconeogenesis.</text>
</comment>
<comment type="catalytic activity">
    <reaction evidence="2">
        <text>beta-D-fructose 1,6-bisphosphate = D-glyceraldehyde 3-phosphate + dihydroxyacetone phosphate</text>
        <dbReference type="Rhea" id="RHEA:14729"/>
        <dbReference type="ChEBI" id="CHEBI:32966"/>
        <dbReference type="ChEBI" id="CHEBI:57642"/>
        <dbReference type="ChEBI" id="CHEBI:59776"/>
        <dbReference type="EC" id="4.1.2.13"/>
    </reaction>
    <physiologicalReaction direction="left-to-right" evidence="2">
        <dbReference type="Rhea" id="RHEA:14730"/>
    </physiologicalReaction>
</comment>
<comment type="pathway">
    <text evidence="1">Carbohydrate degradation; glycolysis; D-glyceraldehyde 3-phosphate and glycerone phosphate from D-glucose: step 4/4.</text>
</comment>
<comment type="subunit">
    <text evidence="1">Tetramer.</text>
</comment>
<comment type="allergen">
    <text evidence="4">Causes an allergic reaction in human. Binds to IgE.</text>
</comment>
<comment type="miscellaneous">
    <text evidence="6">In vertebrates, three forms of this ubiquitous glycolytic enzyme are found, aldolase A in muscle, aldolase B in liver and aldolase C in brain.</text>
</comment>
<comment type="similarity">
    <text evidence="3">Belongs to the class I fructose-bisphosphate aldolase family.</text>
</comment>
<feature type="chain" id="PRO_0000425072" description="Fructose-bisphosphate aldolase A">
    <location>
        <begin position="1"/>
        <end position="15" status="greater than"/>
    </location>
</feature>
<feature type="non-terminal residue" evidence="5">
    <location>
        <position position="15"/>
    </location>
</feature>
<evidence type="ECO:0000250" key="1">
    <source>
        <dbReference type="UniProtKB" id="P00883"/>
    </source>
</evidence>
<evidence type="ECO:0000250" key="2">
    <source>
        <dbReference type="UniProtKB" id="P04075"/>
    </source>
</evidence>
<evidence type="ECO:0000255" key="3"/>
<evidence type="ECO:0000269" key="4">
    <source>
    </source>
</evidence>
<evidence type="ECO:0000303" key="5">
    <source>
    </source>
</evidence>
<evidence type="ECO:0000305" key="6"/>
<keyword id="KW-0020">Allergen</keyword>
<keyword id="KW-0903">Direct protein sequencing</keyword>
<keyword id="KW-0324">Glycolysis</keyword>
<keyword id="KW-0456">Lyase</keyword>
<keyword id="KW-1185">Reference proteome</keyword>
<reference evidence="6" key="1">
    <citation type="journal article" date="2013" name="Clin. Exp. Allergy">
        <title>Identification of enolases and aldolases as important fish allergens in cod, salmon and tuna: component resolved diagnosis using parvalbumin and the new allergens.</title>
        <authorList>
            <person name="Kuehn A."/>
            <person name="Hilger C."/>
            <person name="Lehners-Weber C."/>
            <person name="Codreanu-Morel F."/>
            <person name="Morisset M."/>
            <person name="Metz-Favre C."/>
            <person name="Pauli G."/>
            <person name="de Blay F."/>
            <person name="Revets D."/>
            <person name="Muller C.P."/>
            <person name="Vogel L."/>
            <person name="Vieths S."/>
            <person name="Hentges F."/>
        </authorList>
    </citation>
    <scope>PROTEIN SEQUENCE</scope>
    <scope>ALLERGEN</scope>
    <scope>IDENTIFICATION BY MASS SPECTROMETRY</scope>
    <source>
        <tissue evidence="4">Muscle</tissue>
    </source>
</reference>
<proteinExistence type="evidence at protein level"/>
<sequence>PHAYPFLSPEQKKEL</sequence>
<dbReference type="EC" id="4.1.2.13" evidence="1"/>
<dbReference type="STRING" id="8049.ENSGMOP00000010396"/>
<dbReference type="Allergome" id="10149">
    <property type="allergen name" value="Gad m 3"/>
</dbReference>
<dbReference type="Allergome" id="10150">
    <property type="allergen name" value="Gad m 3.0101"/>
</dbReference>
<dbReference type="UniPathway" id="UPA00109">
    <property type="reaction ID" value="UER00183"/>
</dbReference>
<dbReference type="Proteomes" id="UP000694546">
    <property type="component" value="Unplaced"/>
</dbReference>
<dbReference type="GO" id="GO:0004332">
    <property type="term" value="F:fructose-bisphosphate aldolase activity"/>
    <property type="evidence" value="ECO:0007669"/>
    <property type="project" value="UniProtKB-EC"/>
</dbReference>
<dbReference type="GO" id="GO:0006096">
    <property type="term" value="P:glycolytic process"/>
    <property type="evidence" value="ECO:0007669"/>
    <property type="project" value="UniProtKB-UniPathway"/>
</dbReference>
<organism>
    <name type="scientific">Gadus morhua</name>
    <name type="common">Atlantic cod</name>
    <dbReference type="NCBI Taxonomy" id="8049"/>
    <lineage>
        <taxon>Eukaryota</taxon>
        <taxon>Metazoa</taxon>
        <taxon>Chordata</taxon>
        <taxon>Craniata</taxon>
        <taxon>Vertebrata</taxon>
        <taxon>Euteleostomi</taxon>
        <taxon>Actinopterygii</taxon>
        <taxon>Neopterygii</taxon>
        <taxon>Teleostei</taxon>
        <taxon>Neoteleostei</taxon>
        <taxon>Acanthomorphata</taxon>
        <taxon>Zeiogadaria</taxon>
        <taxon>Gadariae</taxon>
        <taxon>Gadiformes</taxon>
        <taxon>Gadoidei</taxon>
        <taxon>Gadidae</taxon>
        <taxon>Gadus</taxon>
    </lineage>
</organism>
<gene>
    <name evidence="1" type="primary">ALDOA</name>
</gene>